<keyword id="KW-0963">Cytoplasm</keyword>
<sequence length="309" mass="34689">MSIRIIPQDELGSSEKRTADMIPPLLFPRLKNLYNRRAERLRELAENNPLGDYLRFAALIAHAQEVVLYDHPLEMDLTARIKEASAQGKPPLDIHVLPRDKHWQKLLMALIAELKPEMSGPALAVIENLEKASTQELEDMASALFASDFSSVSSDKAPFIWAALSLYWAQMANLIPGKARAEYGEQRQYCPVCGSMPVSSMVQIGTTQGLRYLHCNLCETEWHVVRVKCSNCEQSGKLHYWSLDDEQAAIKAESCDDCGTYLKILYQEKEPKVEAVADDLASLVLDARMEQEGYARSSINPFLFPGEGE</sequence>
<protein>
    <recommendedName>
        <fullName evidence="1">Protein FdhE</fullName>
    </recommendedName>
</protein>
<evidence type="ECO:0000255" key="1">
    <source>
        <dbReference type="HAMAP-Rule" id="MF_00611"/>
    </source>
</evidence>
<feature type="chain" id="PRO_1000130362" description="Protein FdhE">
    <location>
        <begin position="1"/>
        <end position="309"/>
    </location>
</feature>
<comment type="function">
    <text evidence="1">Necessary for formate dehydrogenase activity.</text>
</comment>
<comment type="subcellular location">
    <subcellularLocation>
        <location evidence="1">Cytoplasm</location>
    </subcellularLocation>
</comment>
<comment type="similarity">
    <text evidence="1">Belongs to the FdhE family.</text>
</comment>
<organism>
    <name type="scientific">Escherichia fergusonii (strain ATCC 35469 / DSM 13698 / CCUG 18766 / IAM 14443 / JCM 21226 / LMG 7866 / NBRC 102419 / NCTC 12128 / CDC 0568-73)</name>
    <dbReference type="NCBI Taxonomy" id="585054"/>
    <lineage>
        <taxon>Bacteria</taxon>
        <taxon>Pseudomonadati</taxon>
        <taxon>Pseudomonadota</taxon>
        <taxon>Gammaproteobacteria</taxon>
        <taxon>Enterobacterales</taxon>
        <taxon>Enterobacteriaceae</taxon>
        <taxon>Escherichia</taxon>
    </lineage>
</organism>
<gene>
    <name evidence="1" type="primary">fdhE</name>
    <name type="ordered locus">EFER_3886</name>
</gene>
<proteinExistence type="inferred from homology"/>
<name>FDHE_ESCF3</name>
<accession>B7LVF7</accession>
<reference key="1">
    <citation type="journal article" date="2009" name="PLoS Genet.">
        <title>Organised genome dynamics in the Escherichia coli species results in highly diverse adaptive paths.</title>
        <authorList>
            <person name="Touchon M."/>
            <person name="Hoede C."/>
            <person name="Tenaillon O."/>
            <person name="Barbe V."/>
            <person name="Baeriswyl S."/>
            <person name="Bidet P."/>
            <person name="Bingen E."/>
            <person name="Bonacorsi S."/>
            <person name="Bouchier C."/>
            <person name="Bouvet O."/>
            <person name="Calteau A."/>
            <person name="Chiapello H."/>
            <person name="Clermont O."/>
            <person name="Cruveiller S."/>
            <person name="Danchin A."/>
            <person name="Diard M."/>
            <person name="Dossat C."/>
            <person name="Karoui M.E."/>
            <person name="Frapy E."/>
            <person name="Garry L."/>
            <person name="Ghigo J.M."/>
            <person name="Gilles A.M."/>
            <person name="Johnson J."/>
            <person name="Le Bouguenec C."/>
            <person name="Lescat M."/>
            <person name="Mangenot S."/>
            <person name="Martinez-Jehanne V."/>
            <person name="Matic I."/>
            <person name="Nassif X."/>
            <person name="Oztas S."/>
            <person name="Petit M.A."/>
            <person name="Pichon C."/>
            <person name="Rouy Z."/>
            <person name="Ruf C.S."/>
            <person name="Schneider D."/>
            <person name="Tourret J."/>
            <person name="Vacherie B."/>
            <person name="Vallenet D."/>
            <person name="Medigue C."/>
            <person name="Rocha E.P.C."/>
            <person name="Denamur E."/>
        </authorList>
    </citation>
    <scope>NUCLEOTIDE SEQUENCE [LARGE SCALE GENOMIC DNA]</scope>
    <source>
        <strain>ATCC 35469 / DSM 13698 / BCRC 15582 / CCUG 18766 / IAM 14443 / JCM 21226 / LMG 7866 / NBRC 102419 / NCTC 12128 / CDC 0568-73</strain>
    </source>
</reference>
<dbReference type="EMBL" id="CU928158">
    <property type="protein sequence ID" value="CAQ91321.1"/>
    <property type="molecule type" value="Genomic_DNA"/>
</dbReference>
<dbReference type="RefSeq" id="WP_000027708.1">
    <property type="nucleotide sequence ID" value="NC_011740.1"/>
</dbReference>
<dbReference type="SMR" id="B7LVF7"/>
<dbReference type="GeneID" id="93778047"/>
<dbReference type="KEGG" id="efe:EFER_3886"/>
<dbReference type="HOGENOM" id="CLU_055275_0_0_6"/>
<dbReference type="OrthoDB" id="9794151at2"/>
<dbReference type="Proteomes" id="UP000000745">
    <property type="component" value="Chromosome"/>
</dbReference>
<dbReference type="GO" id="GO:0005829">
    <property type="term" value="C:cytosol"/>
    <property type="evidence" value="ECO:0007669"/>
    <property type="project" value="TreeGrafter"/>
</dbReference>
<dbReference type="GO" id="GO:0008199">
    <property type="term" value="F:ferric iron binding"/>
    <property type="evidence" value="ECO:0007669"/>
    <property type="project" value="TreeGrafter"/>
</dbReference>
<dbReference type="GO" id="GO:0051604">
    <property type="term" value="P:protein maturation"/>
    <property type="evidence" value="ECO:0007669"/>
    <property type="project" value="TreeGrafter"/>
</dbReference>
<dbReference type="CDD" id="cd16341">
    <property type="entry name" value="FdhE"/>
    <property type="match status" value="1"/>
</dbReference>
<dbReference type="FunFam" id="3.90.1670.10:FF:000001">
    <property type="entry name" value="Protein FdhE"/>
    <property type="match status" value="1"/>
</dbReference>
<dbReference type="Gene3D" id="3.90.1670.10">
    <property type="entry name" value="FdhE-like domain"/>
    <property type="match status" value="1"/>
</dbReference>
<dbReference type="HAMAP" id="MF_00611">
    <property type="entry name" value="FdeH"/>
    <property type="match status" value="1"/>
</dbReference>
<dbReference type="InterPro" id="IPR024064">
    <property type="entry name" value="FdhE-like_sf"/>
</dbReference>
<dbReference type="InterPro" id="IPR056796">
    <property type="entry name" value="FdhE_C"/>
</dbReference>
<dbReference type="InterPro" id="IPR056797">
    <property type="entry name" value="FdhE_central"/>
</dbReference>
<dbReference type="InterPro" id="IPR056774">
    <property type="entry name" value="FdhE_N"/>
</dbReference>
<dbReference type="InterPro" id="IPR006452">
    <property type="entry name" value="Formate_DH_accessory"/>
</dbReference>
<dbReference type="NCBIfam" id="TIGR01562">
    <property type="entry name" value="FdhE"/>
    <property type="match status" value="1"/>
</dbReference>
<dbReference type="NCBIfam" id="NF002925">
    <property type="entry name" value="PRK03564.1"/>
    <property type="match status" value="1"/>
</dbReference>
<dbReference type="PANTHER" id="PTHR37689">
    <property type="entry name" value="PROTEIN FDHE"/>
    <property type="match status" value="1"/>
</dbReference>
<dbReference type="PANTHER" id="PTHR37689:SF1">
    <property type="entry name" value="PROTEIN FDHE"/>
    <property type="match status" value="1"/>
</dbReference>
<dbReference type="Pfam" id="PF24860">
    <property type="entry name" value="FdhE_C"/>
    <property type="match status" value="1"/>
</dbReference>
<dbReference type="Pfam" id="PF24859">
    <property type="entry name" value="FdhE_central"/>
    <property type="match status" value="1"/>
</dbReference>
<dbReference type="Pfam" id="PF04216">
    <property type="entry name" value="FdhE_N"/>
    <property type="match status" value="1"/>
</dbReference>
<dbReference type="PIRSF" id="PIRSF018296">
    <property type="entry name" value="Format_dh_formtn"/>
    <property type="match status" value="1"/>
</dbReference>
<dbReference type="SUPFAM" id="SSF144020">
    <property type="entry name" value="FdhE-like"/>
    <property type="match status" value="1"/>
</dbReference>